<comment type="catalytic activity">
    <reaction evidence="1">
        <text>tRNA(Gly) + glycine + ATP = glycyl-tRNA(Gly) + AMP + diphosphate</text>
        <dbReference type="Rhea" id="RHEA:16013"/>
        <dbReference type="Rhea" id="RHEA-COMP:9664"/>
        <dbReference type="Rhea" id="RHEA-COMP:9683"/>
        <dbReference type="ChEBI" id="CHEBI:30616"/>
        <dbReference type="ChEBI" id="CHEBI:33019"/>
        <dbReference type="ChEBI" id="CHEBI:57305"/>
        <dbReference type="ChEBI" id="CHEBI:78442"/>
        <dbReference type="ChEBI" id="CHEBI:78522"/>
        <dbReference type="ChEBI" id="CHEBI:456215"/>
        <dbReference type="EC" id="6.1.1.14"/>
    </reaction>
</comment>
<comment type="subunit">
    <text evidence="1">Tetramer of two alpha and two beta subunits.</text>
</comment>
<comment type="subcellular location">
    <subcellularLocation>
        <location evidence="1">Cytoplasm</location>
    </subcellularLocation>
</comment>
<comment type="similarity">
    <text evidence="1">Belongs to the class-II aminoacyl-tRNA synthetase family.</text>
</comment>
<gene>
    <name evidence="1" type="primary">glyQ</name>
    <name type="ordered locus">HRM2_28140</name>
</gene>
<accession>C0QJ90</accession>
<sequence>MNFQDVILTLNNFWAEKGCVLIQSYDTEVGAGTFHPTTLLKALGPEPWKVAYVQPSRRPTDGRYGENPNRLQHYYQYQVIIKPSPSNIQALYIESLKKLGIDPLDHDIRFVEDDWESPTLGASGLGWEVWLDGMEVTQFTYFQMAGSIELKPVSVEITYGLERLCMYLQGVDSVYDLKWNDTITYGDVYHQQEVEQSTYNFEVADTDMLFDFFNKYESEALRIIEKGLVLPAYEFGLKCSHTFNLLDARGAISVTERTGYIGRIRKIARACSNAYVAQREQMGHPLLNRPVKQERKVSK</sequence>
<protein>
    <recommendedName>
        <fullName evidence="1">Glycine--tRNA ligase alpha subunit</fullName>
        <ecNumber evidence="1">6.1.1.14</ecNumber>
    </recommendedName>
    <alternativeName>
        <fullName evidence="1">Glycyl-tRNA synthetase alpha subunit</fullName>
        <shortName evidence="1">GlyRS</shortName>
    </alternativeName>
</protein>
<reference key="1">
    <citation type="journal article" date="2009" name="Environ. Microbiol.">
        <title>Genome sequence of Desulfobacterium autotrophicum HRM2, a marine sulfate reducer oxidizing organic carbon completely to carbon dioxide.</title>
        <authorList>
            <person name="Strittmatter A.W."/>
            <person name="Liesegang H."/>
            <person name="Rabus R."/>
            <person name="Decker I."/>
            <person name="Amann J."/>
            <person name="Andres S."/>
            <person name="Henne A."/>
            <person name="Fricke W.F."/>
            <person name="Martinez-Arias R."/>
            <person name="Bartels D."/>
            <person name="Goesmann A."/>
            <person name="Krause L."/>
            <person name="Puehler A."/>
            <person name="Klenk H.P."/>
            <person name="Richter M."/>
            <person name="Schuler M."/>
            <person name="Gloeckner F.O."/>
            <person name="Meyerdierks A."/>
            <person name="Gottschalk G."/>
            <person name="Amann R."/>
        </authorList>
    </citation>
    <scope>NUCLEOTIDE SEQUENCE [LARGE SCALE GENOMIC DNA]</scope>
    <source>
        <strain>ATCC 43914 / DSM 3382 / VKM B-1955 / HRM2</strain>
    </source>
</reference>
<keyword id="KW-0030">Aminoacyl-tRNA synthetase</keyword>
<keyword id="KW-0067">ATP-binding</keyword>
<keyword id="KW-0963">Cytoplasm</keyword>
<keyword id="KW-0436">Ligase</keyword>
<keyword id="KW-0547">Nucleotide-binding</keyword>
<keyword id="KW-0648">Protein biosynthesis</keyword>
<keyword id="KW-1185">Reference proteome</keyword>
<organism>
    <name type="scientific">Desulforapulum autotrophicum (strain ATCC 43914 / DSM 3382 / VKM B-1955 / HRM2)</name>
    <name type="common">Desulfobacterium autotrophicum</name>
    <dbReference type="NCBI Taxonomy" id="177437"/>
    <lineage>
        <taxon>Bacteria</taxon>
        <taxon>Pseudomonadati</taxon>
        <taxon>Thermodesulfobacteriota</taxon>
        <taxon>Desulfobacteria</taxon>
        <taxon>Desulfobacterales</taxon>
        <taxon>Desulfobacteraceae</taxon>
        <taxon>Desulforapulum</taxon>
    </lineage>
</organism>
<dbReference type="EC" id="6.1.1.14" evidence="1"/>
<dbReference type="EMBL" id="CP001087">
    <property type="protein sequence ID" value="ACN15903.1"/>
    <property type="molecule type" value="Genomic_DNA"/>
</dbReference>
<dbReference type="RefSeq" id="WP_015904666.1">
    <property type="nucleotide sequence ID" value="NC_012108.1"/>
</dbReference>
<dbReference type="SMR" id="C0QJ90"/>
<dbReference type="STRING" id="177437.HRM2_28140"/>
<dbReference type="KEGG" id="dat:HRM2_28140"/>
<dbReference type="eggNOG" id="COG0752">
    <property type="taxonomic scope" value="Bacteria"/>
</dbReference>
<dbReference type="HOGENOM" id="CLU_057066_1_0_7"/>
<dbReference type="OrthoDB" id="9802183at2"/>
<dbReference type="Proteomes" id="UP000000442">
    <property type="component" value="Chromosome"/>
</dbReference>
<dbReference type="GO" id="GO:0005829">
    <property type="term" value="C:cytosol"/>
    <property type="evidence" value="ECO:0007669"/>
    <property type="project" value="TreeGrafter"/>
</dbReference>
<dbReference type="GO" id="GO:0005524">
    <property type="term" value="F:ATP binding"/>
    <property type="evidence" value="ECO:0007669"/>
    <property type="project" value="UniProtKB-UniRule"/>
</dbReference>
<dbReference type="GO" id="GO:0004820">
    <property type="term" value="F:glycine-tRNA ligase activity"/>
    <property type="evidence" value="ECO:0007669"/>
    <property type="project" value="UniProtKB-UniRule"/>
</dbReference>
<dbReference type="GO" id="GO:0006426">
    <property type="term" value="P:glycyl-tRNA aminoacylation"/>
    <property type="evidence" value="ECO:0007669"/>
    <property type="project" value="UniProtKB-UniRule"/>
</dbReference>
<dbReference type="CDD" id="cd00733">
    <property type="entry name" value="GlyRS_alpha_core"/>
    <property type="match status" value="1"/>
</dbReference>
<dbReference type="FunFam" id="3.30.930.10:FF:000006">
    <property type="entry name" value="Glycine--tRNA ligase alpha subunit"/>
    <property type="match status" value="1"/>
</dbReference>
<dbReference type="Gene3D" id="3.30.930.10">
    <property type="entry name" value="Bira Bifunctional Protein, Domain 2"/>
    <property type="match status" value="1"/>
</dbReference>
<dbReference type="Gene3D" id="1.20.58.180">
    <property type="entry name" value="Class II aaRS and biotin synthetases, domain 2"/>
    <property type="match status" value="1"/>
</dbReference>
<dbReference type="HAMAP" id="MF_00254">
    <property type="entry name" value="Gly_tRNA_synth_alpha"/>
    <property type="match status" value="1"/>
</dbReference>
<dbReference type="InterPro" id="IPR045864">
    <property type="entry name" value="aa-tRNA-synth_II/BPL/LPL"/>
</dbReference>
<dbReference type="InterPro" id="IPR006194">
    <property type="entry name" value="Gly-tRNA-synth_heterodimer"/>
</dbReference>
<dbReference type="InterPro" id="IPR002310">
    <property type="entry name" value="Gly-tRNA_ligase_asu"/>
</dbReference>
<dbReference type="NCBIfam" id="TIGR00388">
    <property type="entry name" value="glyQ"/>
    <property type="match status" value="1"/>
</dbReference>
<dbReference type="NCBIfam" id="NF006827">
    <property type="entry name" value="PRK09348.1"/>
    <property type="match status" value="1"/>
</dbReference>
<dbReference type="PANTHER" id="PTHR30075:SF2">
    <property type="entry name" value="GLYCINE--TRNA LIGASE, CHLOROPLASTIC_MITOCHONDRIAL 2"/>
    <property type="match status" value="1"/>
</dbReference>
<dbReference type="PANTHER" id="PTHR30075">
    <property type="entry name" value="GLYCYL-TRNA SYNTHETASE"/>
    <property type="match status" value="1"/>
</dbReference>
<dbReference type="Pfam" id="PF02091">
    <property type="entry name" value="tRNA-synt_2e"/>
    <property type="match status" value="1"/>
</dbReference>
<dbReference type="PRINTS" id="PR01044">
    <property type="entry name" value="TRNASYNTHGA"/>
</dbReference>
<dbReference type="SUPFAM" id="SSF55681">
    <property type="entry name" value="Class II aaRS and biotin synthetases"/>
    <property type="match status" value="1"/>
</dbReference>
<dbReference type="PROSITE" id="PS50861">
    <property type="entry name" value="AA_TRNA_LIGASE_II_GLYAB"/>
    <property type="match status" value="1"/>
</dbReference>
<feature type="chain" id="PRO_1000204585" description="Glycine--tRNA ligase alpha subunit">
    <location>
        <begin position="1"/>
        <end position="299"/>
    </location>
</feature>
<proteinExistence type="inferred from homology"/>
<evidence type="ECO:0000255" key="1">
    <source>
        <dbReference type="HAMAP-Rule" id="MF_00254"/>
    </source>
</evidence>
<name>SYGA_DESAH</name>